<sequence length="226" mass="25134">MLIQIADLFTPAEAAQIRARLEAADWVDGKVTAGYQSAQVKHNRQLSEQHPLAQELGGLILQRLAANNLFMSAALPRKIFPPLFNRYEGGEAFGYHVDNALRPVPGTAERVRTDLSATLFFSEPDSYDGGELVVDDTYGPRTVKLPAGHMVLYPGTSLHKVTPVTRGARISAFFWLQSLVREDSQRSLLLEMDVAIQRLNQDTPGHASIVQLTGVYHNLLRRWTDV</sequence>
<dbReference type="EC" id="1.14.11.-" evidence="1"/>
<dbReference type="EMBL" id="BX640421">
    <property type="protein sequence ID" value="CAE43788.1"/>
    <property type="molecule type" value="Genomic_DNA"/>
</dbReference>
<dbReference type="RefSeq" id="NP_882044.1">
    <property type="nucleotide sequence ID" value="NC_002929.2"/>
</dbReference>
<dbReference type="RefSeq" id="WP_003812970.1">
    <property type="nucleotide sequence ID" value="NZ_CP039022.1"/>
</dbReference>
<dbReference type="SMR" id="P0A3X2"/>
<dbReference type="STRING" id="257313.BP3529"/>
<dbReference type="PaxDb" id="257313-BP3529"/>
<dbReference type="KEGG" id="bpe:BP3529"/>
<dbReference type="PATRIC" id="fig|257313.5.peg.3821"/>
<dbReference type="eggNOG" id="COG3128">
    <property type="taxonomic scope" value="Bacteria"/>
</dbReference>
<dbReference type="HOGENOM" id="CLU_106663_0_0_4"/>
<dbReference type="Proteomes" id="UP000002676">
    <property type="component" value="Chromosome"/>
</dbReference>
<dbReference type="GO" id="GO:0016706">
    <property type="term" value="F:2-oxoglutarate-dependent dioxygenase activity"/>
    <property type="evidence" value="ECO:0007669"/>
    <property type="project" value="UniProtKB-UniRule"/>
</dbReference>
<dbReference type="GO" id="GO:0005506">
    <property type="term" value="F:iron ion binding"/>
    <property type="evidence" value="ECO:0007669"/>
    <property type="project" value="UniProtKB-UniRule"/>
</dbReference>
<dbReference type="GO" id="GO:0031418">
    <property type="term" value="F:L-ascorbic acid binding"/>
    <property type="evidence" value="ECO:0007669"/>
    <property type="project" value="UniProtKB-KW"/>
</dbReference>
<dbReference type="GO" id="GO:0006974">
    <property type="term" value="P:DNA damage response"/>
    <property type="evidence" value="ECO:0007669"/>
    <property type="project" value="TreeGrafter"/>
</dbReference>
<dbReference type="GO" id="GO:0006879">
    <property type="term" value="P:intracellular iron ion homeostasis"/>
    <property type="evidence" value="ECO:0007669"/>
    <property type="project" value="TreeGrafter"/>
</dbReference>
<dbReference type="Gene3D" id="2.60.120.620">
    <property type="entry name" value="q2cbj1_9rhob like domain"/>
    <property type="match status" value="1"/>
</dbReference>
<dbReference type="Gene3D" id="4.10.860.20">
    <property type="entry name" value="Rabenosyn, Rab binding domain"/>
    <property type="match status" value="1"/>
</dbReference>
<dbReference type="HAMAP" id="MF_00657">
    <property type="entry name" value="Hydroxyl_YbiX"/>
    <property type="match status" value="1"/>
</dbReference>
<dbReference type="InterPro" id="IPR005123">
    <property type="entry name" value="Oxoglu/Fe-dep_dioxygenase_dom"/>
</dbReference>
<dbReference type="InterPro" id="IPR041097">
    <property type="entry name" value="PKHD_C"/>
</dbReference>
<dbReference type="InterPro" id="IPR023550">
    <property type="entry name" value="PKHD_hydroxylase"/>
</dbReference>
<dbReference type="InterPro" id="IPR006620">
    <property type="entry name" value="Pro_4_hyd_alph"/>
</dbReference>
<dbReference type="InterPro" id="IPR044862">
    <property type="entry name" value="Pro_4_hyd_alph_FE2OG_OXY"/>
</dbReference>
<dbReference type="NCBIfam" id="NF003974">
    <property type="entry name" value="PRK05467.1-3"/>
    <property type="match status" value="1"/>
</dbReference>
<dbReference type="NCBIfam" id="NF003975">
    <property type="entry name" value="PRK05467.1-4"/>
    <property type="match status" value="1"/>
</dbReference>
<dbReference type="PANTHER" id="PTHR41536">
    <property type="entry name" value="PKHD-TYPE HYDROXYLASE YBIX"/>
    <property type="match status" value="1"/>
</dbReference>
<dbReference type="PANTHER" id="PTHR41536:SF1">
    <property type="entry name" value="PKHD-TYPE HYDROXYLASE YBIX"/>
    <property type="match status" value="1"/>
</dbReference>
<dbReference type="Pfam" id="PF13640">
    <property type="entry name" value="2OG-FeII_Oxy_3"/>
    <property type="match status" value="1"/>
</dbReference>
<dbReference type="Pfam" id="PF18331">
    <property type="entry name" value="PKHD_C"/>
    <property type="match status" value="1"/>
</dbReference>
<dbReference type="SMART" id="SM00702">
    <property type="entry name" value="P4Hc"/>
    <property type="match status" value="1"/>
</dbReference>
<dbReference type="PROSITE" id="PS51471">
    <property type="entry name" value="FE2OG_OXY"/>
    <property type="match status" value="1"/>
</dbReference>
<protein>
    <recommendedName>
        <fullName evidence="1">PKHD-type hydroxylase BP3529</fullName>
        <ecNumber evidence="1">1.14.11.-</ecNumber>
    </recommendedName>
</protein>
<accession>P0A3X2</accession>
<accession>Q9S3N8</accession>
<comment type="cofactor">
    <cofactor evidence="1">
        <name>Fe(2+)</name>
        <dbReference type="ChEBI" id="CHEBI:29033"/>
    </cofactor>
    <text evidence="1">Binds 1 Fe(2+) ion per subunit.</text>
</comment>
<comment type="cofactor">
    <cofactor evidence="1">
        <name>L-ascorbate</name>
        <dbReference type="ChEBI" id="CHEBI:38290"/>
    </cofactor>
</comment>
<keyword id="KW-0223">Dioxygenase</keyword>
<keyword id="KW-0408">Iron</keyword>
<keyword id="KW-0479">Metal-binding</keyword>
<keyword id="KW-0560">Oxidoreductase</keyword>
<keyword id="KW-1185">Reference proteome</keyword>
<keyword id="KW-0847">Vitamin C</keyword>
<reference key="1">
    <citation type="journal article" date="2003" name="Nat. Genet.">
        <title>Comparative analysis of the genome sequences of Bordetella pertussis, Bordetella parapertussis and Bordetella bronchiseptica.</title>
        <authorList>
            <person name="Parkhill J."/>
            <person name="Sebaihia M."/>
            <person name="Preston A."/>
            <person name="Murphy L.D."/>
            <person name="Thomson N.R."/>
            <person name="Harris D.E."/>
            <person name="Holden M.T.G."/>
            <person name="Churcher C.M."/>
            <person name="Bentley S.D."/>
            <person name="Mungall K.L."/>
            <person name="Cerdeno-Tarraga A.-M."/>
            <person name="Temple L."/>
            <person name="James K.D."/>
            <person name="Harris B."/>
            <person name="Quail M.A."/>
            <person name="Achtman M."/>
            <person name="Atkin R."/>
            <person name="Baker S."/>
            <person name="Basham D."/>
            <person name="Bason N."/>
            <person name="Cherevach I."/>
            <person name="Chillingworth T."/>
            <person name="Collins M."/>
            <person name="Cronin A."/>
            <person name="Davis P."/>
            <person name="Doggett J."/>
            <person name="Feltwell T."/>
            <person name="Goble A."/>
            <person name="Hamlin N."/>
            <person name="Hauser H."/>
            <person name="Holroyd S."/>
            <person name="Jagels K."/>
            <person name="Leather S."/>
            <person name="Moule S."/>
            <person name="Norberczak H."/>
            <person name="O'Neil S."/>
            <person name="Ormond D."/>
            <person name="Price C."/>
            <person name="Rabbinowitsch E."/>
            <person name="Rutter S."/>
            <person name="Sanders M."/>
            <person name="Saunders D."/>
            <person name="Seeger K."/>
            <person name="Sharp S."/>
            <person name="Simmonds M."/>
            <person name="Skelton J."/>
            <person name="Squares R."/>
            <person name="Squares S."/>
            <person name="Stevens K."/>
            <person name="Unwin L."/>
            <person name="Whitehead S."/>
            <person name="Barrell B.G."/>
            <person name="Maskell D.J."/>
        </authorList>
    </citation>
    <scope>NUCLEOTIDE SEQUENCE [LARGE SCALE GENOMIC DNA]</scope>
    <source>
        <strain>Tohama I / ATCC BAA-589 / NCTC 13251</strain>
    </source>
</reference>
<gene>
    <name type="ordered locus">BP3529</name>
</gene>
<name>Y3529_BORPE</name>
<evidence type="ECO:0000255" key="1">
    <source>
        <dbReference type="HAMAP-Rule" id="MF_00657"/>
    </source>
</evidence>
<organism>
    <name type="scientific">Bordetella pertussis (strain Tohama I / ATCC BAA-589 / NCTC 13251)</name>
    <dbReference type="NCBI Taxonomy" id="257313"/>
    <lineage>
        <taxon>Bacteria</taxon>
        <taxon>Pseudomonadati</taxon>
        <taxon>Pseudomonadota</taxon>
        <taxon>Betaproteobacteria</taxon>
        <taxon>Burkholderiales</taxon>
        <taxon>Alcaligenaceae</taxon>
        <taxon>Bordetella</taxon>
    </lineage>
</organism>
<proteinExistence type="inferred from homology"/>
<feature type="chain" id="PRO_0000206673" description="PKHD-type hydroxylase BP3529">
    <location>
        <begin position="1"/>
        <end position="226"/>
    </location>
</feature>
<feature type="domain" description="Fe2OG dioxygenase" evidence="1">
    <location>
        <begin position="78"/>
        <end position="178"/>
    </location>
</feature>
<feature type="binding site" evidence="1">
    <location>
        <position position="96"/>
    </location>
    <ligand>
        <name>Fe cation</name>
        <dbReference type="ChEBI" id="CHEBI:24875"/>
    </ligand>
</feature>
<feature type="binding site" evidence="1">
    <location>
        <position position="98"/>
    </location>
    <ligand>
        <name>Fe cation</name>
        <dbReference type="ChEBI" id="CHEBI:24875"/>
    </ligand>
</feature>
<feature type="binding site" evidence="1">
    <location>
        <position position="159"/>
    </location>
    <ligand>
        <name>Fe cation</name>
        <dbReference type="ChEBI" id="CHEBI:24875"/>
    </ligand>
</feature>
<feature type="binding site" evidence="1">
    <location>
        <position position="169"/>
    </location>
    <ligand>
        <name>2-oxoglutarate</name>
        <dbReference type="ChEBI" id="CHEBI:16810"/>
    </ligand>
</feature>